<feature type="chain" id="PRO_1000025020" description="Nicotinate phosphoribosyltransferase">
    <location>
        <begin position="1"/>
        <end position="401"/>
    </location>
</feature>
<feature type="modified residue" description="Phosphohistidine; by autocatalysis" evidence="1">
    <location>
        <position position="221"/>
    </location>
</feature>
<reference key="1">
    <citation type="journal article" date="2006" name="PLoS Genet.">
        <title>The complete genome sequence and comparative genome analysis of the high pathogenicity Yersinia enterocolitica strain 8081.</title>
        <authorList>
            <person name="Thomson N.R."/>
            <person name="Howard S."/>
            <person name="Wren B.W."/>
            <person name="Holden M.T.G."/>
            <person name="Crossman L."/>
            <person name="Challis G.L."/>
            <person name="Churcher C."/>
            <person name="Mungall K."/>
            <person name="Brooks K."/>
            <person name="Chillingworth T."/>
            <person name="Feltwell T."/>
            <person name="Abdellah Z."/>
            <person name="Hauser H."/>
            <person name="Jagels K."/>
            <person name="Maddison M."/>
            <person name="Moule S."/>
            <person name="Sanders M."/>
            <person name="Whitehead S."/>
            <person name="Quail M.A."/>
            <person name="Dougan G."/>
            <person name="Parkhill J."/>
            <person name="Prentice M.B."/>
        </authorList>
    </citation>
    <scope>NUCLEOTIDE SEQUENCE [LARGE SCALE GENOMIC DNA]</scope>
    <source>
        <strain>NCTC 13174 / 8081</strain>
    </source>
</reference>
<gene>
    <name evidence="1" type="primary">pncB</name>
    <name type="ordered locus">YE1565</name>
</gene>
<name>PNCB_YERE8</name>
<sequence>MTQDASPILTSLLDTDAYKLHMQQAVFHRYRHITVAAEFRCRGDELLGEYADEIRHQITLMSQLALTDDEYQYLSGLPFFKNDYLNWLRAFRFNPEQVTVSDNDGELDIRITGLWCETILWEVPLLAVISEIVHRRRSAHVTADLAVSQLRSKLQQFNALSADIDITHFKLMDFGTRRRFSREIQHAIVSHLKDEFPYLVGTSNYDLARKLSLDPVGTQAHEWFQAHQQISPVLANSQRVALQAWLDEYPNQLGVALTDCITMDAFLRDFDKTFADRYQGLRHDSGDPVEWGEKAIAHYEKLGIDPMSKTLVFSDNLDLEKALSLYRHFYQRVKLVFGIGTRLTCDIPGIKPLNIVIKLVECNDKPVAKLSDSPGKTICHDPAFVDELREAFALPLVKKAS</sequence>
<keyword id="KW-0436">Ligase</keyword>
<keyword id="KW-0597">Phosphoprotein</keyword>
<keyword id="KW-0662">Pyridine nucleotide biosynthesis</keyword>
<organism>
    <name type="scientific">Yersinia enterocolitica serotype O:8 / biotype 1B (strain NCTC 13174 / 8081)</name>
    <dbReference type="NCBI Taxonomy" id="393305"/>
    <lineage>
        <taxon>Bacteria</taxon>
        <taxon>Pseudomonadati</taxon>
        <taxon>Pseudomonadota</taxon>
        <taxon>Gammaproteobacteria</taxon>
        <taxon>Enterobacterales</taxon>
        <taxon>Yersiniaceae</taxon>
        <taxon>Yersinia</taxon>
    </lineage>
</organism>
<evidence type="ECO:0000255" key="1">
    <source>
        <dbReference type="HAMAP-Rule" id="MF_00570"/>
    </source>
</evidence>
<protein>
    <recommendedName>
        <fullName evidence="1">Nicotinate phosphoribosyltransferase</fullName>
        <shortName evidence="1">NAPRTase</shortName>
        <ecNumber evidence="1">6.3.4.21</ecNumber>
    </recommendedName>
</protein>
<accession>A1JMP2</accession>
<dbReference type="EC" id="6.3.4.21" evidence="1"/>
<dbReference type="EMBL" id="AM286415">
    <property type="protein sequence ID" value="CAL11643.1"/>
    <property type="molecule type" value="Genomic_DNA"/>
</dbReference>
<dbReference type="RefSeq" id="WP_011816044.1">
    <property type="nucleotide sequence ID" value="NC_008800.1"/>
</dbReference>
<dbReference type="RefSeq" id="YP_001005859.1">
    <property type="nucleotide sequence ID" value="NC_008800.1"/>
</dbReference>
<dbReference type="SMR" id="A1JMP2"/>
<dbReference type="KEGG" id="yen:YE1565"/>
<dbReference type="PATRIC" id="fig|393305.7.peg.1693"/>
<dbReference type="eggNOG" id="COG1488">
    <property type="taxonomic scope" value="Bacteria"/>
</dbReference>
<dbReference type="HOGENOM" id="CLU_030991_1_0_6"/>
<dbReference type="OrthoDB" id="9771406at2"/>
<dbReference type="UniPathway" id="UPA00253">
    <property type="reaction ID" value="UER00457"/>
</dbReference>
<dbReference type="Proteomes" id="UP000000642">
    <property type="component" value="Chromosome"/>
</dbReference>
<dbReference type="GO" id="GO:0005829">
    <property type="term" value="C:cytosol"/>
    <property type="evidence" value="ECO:0007669"/>
    <property type="project" value="TreeGrafter"/>
</dbReference>
<dbReference type="GO" id="GO:0004516">
    <property type="term" value="F:nicotinate phosphoribosyltransferase activity"/>
    <property type="evidence" value="ECO:0007669"/>
    <property type="project" value="UniProtKB-UniRule"/>
</dbReference>
<dbReference type="GO" id="GO:0034355">
    <property type="term" value="P:NAD biosynthetic process via the salvage pathway"/>
    <property type="evidence" value="ECO:0007669"/>
    <property type="project" value="TreeGrafter"/>
</dbReference>
<dbReference type="CDD" id="cd01401">
    <property type="entry name" value="PncB_like"/>
    <property type="match status" value="1"/>
</dbReference>
<dbReference type="FunFam" id="3.20.140.10:FF:000001">
    <property type="entry name" value="Nicotinate phosphoribosyltransferase"/>
    <property type="match status" value="1"/>
</dbReference>
<dbReference type="Gene3D" id="3.20.140.10">
    <property type="entry name" value="nicotinate phosphoribosyltransferase"/>
    <property type="match status" value="1"/>
</dbReference>
<dbReference type="HAMAP" id="MF_00570">
    <property type="entry name" value="NAPRTase"/>
    <property type="match status" value="1"/>
</dbReference>
<dbReference type="InterPro" id="IPR041525">
    <property type="entry name" value="N/Namide_PRibTrfase"/>
</dbReference>
<dbReference type="InterPro" id="IPR040727">
    <property type="entry name" value="NAPRTase_N"/>
</dbReference>
<dbReference type="InterPro" id="IPR006406">
    <property type="entry name" value="Nic_PRibTrfase"/>
</dbReference>
<dbReference type="InterPro" id="IPR007229">
    <property type="entry name" value="Nic_PRibTrfase-Fam"/>
</dbReference>
<dbReference type="InterPro" id="IPR036068">
    <property type="entry name" value="Nicotinate_pribotase-like_C"/>
</dbReference>
<dbReference type="NCBIfam" id="TIGR01514">
    <property type="entry name" value="NAPRTase"/>
    <property type="match status" value="1"/>
</dbReference>
<dbReference type="NCBIfam" id="NF003704">
    <property type="entry name" value="PRK05321.1"/>
    <property type="match status" value="1"/>
</dbReference>
<dbReference type="PANTHER" id="PTHR11098">
    <property type="entry name" value="NICOTINATE PHOSPHORIBOSYLTRANSFERASE"/>
    <property type="match status" value="1"/>
</dbReference>
<dbReference type="PANTHER" id="PTHR11098:SF1">
    <property type="entry name" value="NICOTINATE PHOSPHORIBOSYLTRANSFERASE"/>
    <property type="match status" value="1"/>
</dbReference>
<dbReference type="Pfam" id="PF04095">
    <property type="entry name" value="NAPRTase"/>
    <property type="match status" value="1"/>
</dbReference>
<dbReference type="Pfam" id="PF17767">
    <property type="entry name" value="NAPRTase_N"/>
    <property type="match status" value="1"/>
</dbReference>
<dbReference type="PIRSF" id="PIRSF000484">
    <property type="entry name" value="NAPRT"/>
    <property type="match status" value="1"/>
</dbReference>
<dbReference type="SUPFAM" id="SSF51690">
    <property type="entry name" value="Nicotinate/Quinolinate PRTase C-terminal domain-like"/>
    <property type="match status" value="1"/>
</dbReference>
<dbReference type="SUPFAM" id="SSF54675">
    <property type="entry name" value="Nicotinate/Quinolinate PRTase N-terminal domain-like"/>
    <property type="match status" value="1"/>
</dbReference>
<proteinExistence type="inferred from homology"/>
<comment type="function">
    <text evidence="1">Catalyzes the synthesis of beta-nicotinate D-ribonucleotide from nicotinate and 5-phospho-D-ribose 1-phosphate at the expense of ATP.</text>
</comment>
<comment type="catalytic activity">
    <reaction evidence="1">
        <text>nicotinate + 5-phospho-alpha-D-ribose 1-diphosphate + ATP + H2O = nicotinate beta-D-ribonucleotide + ADP + phosphate + diphosphate</text>
        <dbReference type="Rhea" id="RHEA:36163"/>
        <dbReference type="ChEBI" id="CHEBI:15377"/>
        <dbReference type="ChEBI" id="CHEBI:30616"/>
        <dbReference type="ChEBI" id="CHEBI:32544"/>
        <dbReference type="ChEBI" id="CHEBI:33019"/>
        <dbReference type="ChEBI" id="CHEBI:43474"/>
        <dbReference type="ChEBI" id="CHEBI:57502"/>
        <dbReference type="ChEBI" id="CHEBI:58017"/>
        <dbReference type="ChEBI" id="CHEBI:456216"/>
        <dbReference type="EC" id="6.3.4.21"/>
    </reaction>
</comment>
<comment type="pathway">
    <text evidence="1">Cofactor biosynthesis; NAD(+) biosynthesis; nicotinate D-ribonucleotide from nicotinate: step 1/1.</text>
</comment>
<comment type="PTM">
    <text evidence="1">Transiently phosphorylated on a His residue during the reaction cycle. Phosphorylation strongly increases the affinity for substrates and increases the rate of nicotinate D-ribonucleotide production. Dephosphorylation regenerates the low-affinity form of the enzyme, leading to product release.</text>
</comment>
<comment type="similarity">
    <text evidence="1">Belongs to the NAPRTase family.</text>
</comment>